<dbReference type="EMBL" id="CP000436">
    <property type="protein sequence ID" value="ABI24873.1"/>
    <property type="molecule type" value="Genomic_DNA"/>
</dbReference>
<dbReference type="KEGG" id="hso:HS_0596"/>
<dbReference type="eggNOG" id="COG3768">
    <property type="taxonomic scope" value="Bacteria"/>
</dbReference>
<dbReference type="HOGENOM" id="CLU_057693_2_0_6"/>
<dbReference type="GO" id="GO:0005886">
    <property type="term" value="C:plasma membrane"/>
    <property type="evidence" value="ECO:0007669"/>
    <property type="project" value="UniProtKB-SubCell"/>
</dbReference>
<dbReference type="HAMAP" id="MF_01085">
    <property type="entry name" value="UPF0283"/>
    <property type="match status" value="1"/>
</dbReference>
<dbReference type="InterPro" id="IPR021147">
    <property type="entry name" value="DUF697"/>
</dbReference>
<dbReference type="InterPro" id="IPR006507">
    <property type="entry name" value="UPF0283"/>
</dbReference>
<dbReference type="NCBIfam" id="TIGR01620">
    <property type="entry name" value="hyp_HI0043"/>
    <property type="match status" value="1"/>
</dbReference>
<dbReference type="PANTHER" id="PTHR39342">
    <property type="entry name" value="UPF0283 MEMBRANE PROTEIN YCJF"/>
    <property type="match status" value="1"/>
</dbReference>
<dbReference type="PANTHER" id="PTHR39342:SF1">
    <property type="entry name" value="UPF0283 MEMBRANE PROTEIN YCJF"/>
    <property type="match status" value="1"/>
</dbReference>
<dbReference type="Pfam" id="PF05128">
    <property type="entry name" value="DUF697"/>
    <property type="match status" value="1"/>
</dbReference>
<name>Y596_HISS1</name>
<proteinExistence type="inferred from homology"/>
<keyword id="KW-0997">Cell inner membrane</keyword>
<keyword id="KW-1003">Cell membrane</keyword>
<keyword id="KW-0472">Membrane</keyword>
<keyword id="KW-0812">Transmembrane</keyword>
<keyword id="KW-1133">Transmembrane helix</keyword>
<evidence type="ECO:0000255" key="1">
    <source>
        <dbReference type="HAMAP-Rule" id="MF_01085"/>
    </source>
</evidence>
<gene>
    <name type="ordered locus">HS_0596</name>
</gene>
<feature type="chain" id="PRO_1000064843" description="UPF0283 membrane protein HS_0596">
    <location>
        <begin position="1"/>
        <end position="357"/>
    </location>
</feature>
<feature type="transmembrane region" description="Helical" evidence="1">
    <location>
        <begin position="67"/>
        <end position="87"/>
    </location>
</feature>
<feature type="transmembrane region" description="Helical" evidence="1">
    <location>
        <begin position="96"/>
        <end position="116"/>
    </location>
</feature>
<feature type="transmembrane region" description="Helical" evidence="1">
    <location>
        <begin position="213"/>
        <end position="233"/>
    </location>
</feature>
<reference key="1">
    <citation type="journal article" date="2007" name="J. Bacteriol.">
        <title>Complete genome sequence of Haemophilus somnus (Histophilus somni) strain 129Pt and comparison to Haemophilus ducreyi 35000HP and Haemophilus influenzae Rd.</title>
        <authorList>
            <person name="Challacombe J.F."/>
            <person name="Duncan A.J."/>
            <person name="Brettin T.S."/>
            <person name="Bruce D."/>
            <person name="Chertkov O."/>
            <person name="Detter J.C."/>
            <person name="Han C.S."/>
            <person name="Misra M."/>
            <person name="Richardson P."/>
            <person name="Tapia R."/>
            <person name="Thayer N."/>
            <person name="Xie G."/>
            <person name="Inzana T.J."/>
        </authorList>
    </citation>
    <scope>NUCLEOTIDE SEQUENCE [LARGE SCALE GENOMIC DNA]</scope>
    <source>
        <strain>129Pt</strain>
    </source>
</reference>
<comment type="subcellular location">
    <subcellularLocation>
        <location evidence="1">Cell inner membrane</location>
        <topology evidence="1">Multi-pass membrane protein</topology>
    </subcellularLocation>
</comment>
<comment type="similarity">
    <text evidence="1">Belongs to the UPF0283 family.</text>
</comment>
<organism>
    <name type="scientific">Histophilus somni (strain 129Pt)</name>
    <name type="common">Haemophilus somnus</name>
    <dbReference type="NCBI Taxonomy" id="205914"/>
    <lineage>
        <taxon>Bacteria</taxon>
        <taxon>Pseudomonadati</taxon>
        <taxon>Pseudomonadota</taxon>
        <taxon>Gammaproteobacteria</taxon>
        <taxon>Pasteurellales</taxon>
        <taxon>Pasteurellaceae</taxon>
        <taxon>Histophilus</taxon>
    </lineage>
</organism>
<accession>Q0I337</accession>
<sequence length="357" mass="40814">MPKKVFQQEDVEQKITENFEPKQEFEQDELDIEMDCSQFETTMDRQNTDIPFQHMVRPKVTMWQKLLMATICLFSCGILAQSVQWLVDSWRDNQWIAFVFAMVSLFLVLLGLGAIIKEWRRLVQLKKRLILQEKSREIRSKSAVNLTEVSSEGKELCLKIASLMGIDDKSPQLIAWQEQVHEAYTEQEILRLFSQNVLIPFDRVAKKLISKNAVESALIVAVSPLAIVDMFFIAWRNIRLINQLAKLYGIELGYVSRLRLLRMVFVNMAFAGAADVIQDLGLEWLSQDITAKLSARVAQGIGVGILTARLGIKAMEFCRPIAVAPEEKLRLSHIQTELLGTLKTTLFSANKVKEKVR</sequence>
<protein>
    <recommendedName>
        <fullName evidence="1">UPF0283 membrane protein HS_0596</fullName>
    </recommendedName>
</protein>